<keyword id="KW-1003">Cell membrane</keyword>
<keyword id="KW-0325">Glycoprotein</keyword>
<keyword id="KW-0472">Membrane</keyword>
<keyword id="KW-0812">Transmembrane</keyword>
<keyword id="KW-1133">Transmembrane helix</keyword>
<keyword id="KW-0813">Transport</keyword>
<proteinExistence type="evidence at protein level"/>
<feature type="chain" id="PRO_0000448817" description="Efflux pump notK'">
    <location>
        <begin position="1"/>
        <end position="577"/>
    </location>
</feature>
<feature type="transmembrane region" description="Helical" evidence="1">
    <location>
        <begin position="104"/>
        <end position="124"/>
    </location>
</feature>
<feature type="transmembrane region" description="Helical" evidence="1">
    <location>
        <begin position="151"/>
        <end position="171"/>
    </location>
</feature>
<feature type="transmembrane region" description="Helical" evidence="1">
    <location>
        <begin position="189"/>
        <end position="209"/>
    </location>
</feature>
<feature type="transmembrane region" description="Helical" evidence="1">
    <location>
        <begin position="241"/>
        <end position="261"/>
    </location>
</feature>
<feature type="transmembrane region" description="Helical" evidence="1">
    <location>
        <begin position="265"/>
        <end position="285"/>
    </location>
</feature>
<feature type="transmembrane region" description="Helical" evidence="1">
    <location>
        <begin position="328"/>
        <end position="348"/>
    </location>
</feature>
<feature type="transmembrane region" description="Helical" evidence="1">
    <location>
        <begin position="373"/>
        <end position="393"/>
    </location>
</feature>
<feature type="transmembrane region" description="Helical" evidence="1">
    <location>
        <begin position="413"/>
        <end position="433"/>
    </location>
</feature>
<feature type="transmembrane region" description="Helical" evidence="1">
    <location>
        <begin position="434"/>
        <end position="454"/>
    </location>
</feature>
<feature type="transmembrane region" description="Helical" evidence="1">
    <location>
        <begin position="476"/>
        <end position="496"/>
    </location>
</feature>
<feature type="region of interest" description="Disordered" evidence="3">
    <location>
        <begin position="555"/>
        <end position="577"/>
    </location>
</feature>
<feature type="compositionally biased region" description="Low complexity" evidence="3">
    <location>
        <begin position="555"/>
        <end position="566"/>
    </location>
</feature>
<feature type="glycosylation site" description="N-linked (GlcNAc...) asparagine" evidence="2">
    <location>
        <position position="62"/>
    </location>
</feature>
<feature type="glycosylation site" description="N-linked (GlcNAc...) asparagine" evidence="2">
    <location>
        <position position="84"/>
    </location>
</feature>
<feature type="glycosylation site" description="N-linked (GlcNAc...) asparagine" evidence="2">
    <location>
        <position position="320"/>
    </location>
</feature>
<feature type="glycosylation site" description="N-linked (GlcNAc...) asparagine" evidence="2">
    <location>
        <position position="558"/>
    </location>
</feature>
<sequence length="577" mass="61924">MGHAEWIGRTNTAVARSAVGKWFRLEGSGHPRERKGAYFFTELRAGLATFFAMAYIISVNANITSDTGATCVCPAEDLETHCNNNTEYLLCKQEVNRDIVTATAAIASVASFFLGLLANLPVALAPGMGLNAYFAYTVVGHHGSGLIPYSLAVTAVFVEGWIFLGLTMLGIRQWLARAIPASIKLATGAGIGLYLTLIGLSYSAGLGLVQGAQDSPIQLAGCASDEFDSDGLCPSYAKMRNPTMWIGIFCGGFFTVFLMMYRVKGAVIAGILLVSIISWPRTTPVTYFPHTTEGDSMFDFFKKVVTFHPIQHTLVAQDWNISSNGGQFGLALITFLYVDILDATGTLYSMAKFAGAMDERTQDFEGSAMAYTVDAICISIGSLFGSPPVTAFVESGAGISEGGKTGLTSCMTGICFFIAVFFAPIFASIPPWATGSTLVIVGSMMMHATLEINWRYMGDAIPAFLTISVMPFTYSIADGLIAGIISYILINGGVWVIAKCTGGRIVPPNRDDEHEAWTWKIPGGFFPPWLVRAVHGKKDFWRADDEASQLDLGVMPPNGSMSSGSPEQVAEKAVGKY</sequence>
<name>NOTK_ASPVE</name>
<gene>
    <name evidence="5" type="primary">notK'</name>
</gene>
<organism>
    <name type="scientific">Aspergillus versicolor</name>
    <dbReference type="NCBI Taxonomy" id="46472"/>
    <lineage>
        <taxon>Eukaryota</taxon>
        <taxon>Fungi</taxon>
        <taxon>Dikarya</taxon>
        <taxon>Ascomycota</taxon>
        <taxon>Pezizomycotina</taxon>
        <taxon>Eurotiomycetes</taxon>
        <taxon>Eurotiomycetidae</taxon>
        <taxon>Eurotiales</taxon>
        <taxon>Aspergillaceae</taxon>
        <taxon>Aspergillus</taxon>
        <taxon>Aspergillus subgen. Nidulantes</taxon>
    </lineage>
</organism>
<protein>
    <recommendedName>
        <fullName evidence="5">Efflux pump notK'</fullName>
    </recommendedName>
    <alternativeName>
        <fullName evidence="5">Notoamide biosynthesis cluster protein K'</fullName>
    </alternativeName>
</protein>
<comment type="function">
    <text evidence="7">Efflux pump; part of the gene cluster that mediates the biosynthesis of notoamide, a fungal indole alkaloid that belongs to a family of natural products containing a characteristic bicyclo[2.2.2]diazaoctane core.</text>
</comment>
<comment type="subcellular location">
    <subcellularLocation>
        <location evidence="6">Cell membrane</location>
        <topology evidence="1">Multi-pass membrane protein</topology>
    </subcellularLocation>
</comment>
<comment type="biotechnology">
    <text evidence="4">Notoamides have been shown to exhibit antitumoral activities (PubMed:17304611). Notoamides A-C show moderate cytotoxicity against HeLa and L1210 cells with IC(50) values in the range of 22-52 mg/ml, but the IC(50) value of notoamide D is greater than 100 mg/ml (PubMed:17304611). Moreover, notoamide C induces G2/M-cell cycle arrest at a concentration of 6.3 mg/ml (PubMed:17304611).</text>
</comment>
<comment type="similarity">
    <text evidence="6">Belongs to the nucleobase:cation symporter-2 (NCS2) (TC 2.A.40) family. Azg-like subfamily.</text>
</comment>
<evidence type="ECO:0000255" key="1"/>
<evidence type="ECO:0000255" key="2">
    <source>
        <dbReference type="PROSITE-ProRule" id="PRU00498"/>
    </source>
</evidence>
<evidence type="ECO:0000256" key="3">
    <source>
        <dbReference type="SAM" id="MobiDB-lite"/>
    </source>
</evidence>
<evidence type="ECO:0000269" key="4">
    <source>
    </source>
</evidence>
<evidence type="ECO:0000303" key="5">
    <source>
    </source>
</evidence>
<evidence type="ECO:0000305" key="6"/>
<evidence type="ECO:0000305" key="7">
    <source>
    </source>
</evidence>
<reference key="1">
    <citation type="journal article" date="2012" name="Med. Chem. Commun.">
        <title>Comparative analysis of the biosynthetic systems for fungal bicyclo[2.2.2]diazaoctane indole alkaloids: the (+)/(-)-notoamide, paraherquamide and malbrancheamide pathways.</title>
        <authorList>
            <person name="Li S."/>
            <person name="Anand K."/>
            <person name="Tran H."/>
            <person name="Yu F."/>
            <person name="Finefield J.M."/>
            <person name="Sunderhaus J.D."/>
            <person name="McAfoos T.J."/>
            <person name="Tsukamoto S."/>
            <person name="Williams R.M."/>
            <person name="Sherman D.H."/>
        </authorList>
    </citation>
    <scope>NUCLEOTIDE SEQUENCE [GENOMIC DNA]</scope>
    <scope>FUNCTION</scope>
    <source>
        <strain>NRRL 35600</strain>
    </source>
</reference>
<reference key="2">
    <citation type="journal article" date="2007" name="Angew. Chem. Int. Ed.">
        <title>Notoamides A-D: prenylated indole alkaloids isolated from a marine-derived fungus, Aspergillus sp.</title>
        <authorList>
            <person name="Kato H."/>
            <person name="Yoshida T."/>
            <person name="Tokue T."/>
            <person name="Nojiri Y."/>
            <person name="Hirota H."/>
            <person name="Ohta T."/>
            <person name="Williams R.M."/>
            <person name="Tsukamoto S."/>
        </authorList>
    </citation>
    <scope>BIOTECHNOLOGY</scope>
</reference>
<dbReference type="EMBL" id="JQ708194">
    <property type="protein sequence ID" value="AGC83582.1"/>
    <property type="molecule type" value="Genomic_DNA"/>
</dbReference>
<dbReference type="SMR" id="L7WRR4"/>
<dbReference type="GlyCosmos" id="L7WRR4">
    <property type="glycosylation" value="4 sites, No reported glycans"/>
</dbReference>
<dbReference type="VEuPathDB" id="FungiDB:ASPVEDRAFT_371653"/>
<dbReference type="GO" id="GO:0005886">
    <property type="term" value="C:plasma membrane"/>
    <property type="evidence" value="ECO:0007669"/>
    <property type="project" value="UniProtKB-SubCell"/>
</dbReference>
<dbReference type="GO" id="GO:0005345">
    <property type="term" value="F:purine nucleobase transmembrane transporter activity"/>
    <property type="evidence" value="ECO:0007669"/>
    <property type="project" value="TreeGrafter"/>
</dbReference>
<dbReference type="GO" id="GO:0015853">
    <property type="term" value="P:adenine transport"/>
    <property type="evidence" value="ECO:0007669"/>
    <property type="project" value="TreeGrafter"/>
</dbReference>
<dbReference type="GO" id="GO:0015854">
    <property type="term" value="P:guanine transport"/>
    <property type="evidence" value="ECO:0007669"/>
    <property type="project" value="TreeGrafter"/>
</dbReference>
<dbReference type="InterPro" id="IPR045018">
    <property type="entry name" value="Azg-like"/>
</dbReference>
<dbReference type="InterPro" id="IPR006043">
    <property type="entry name" value="NCS2"/>
</dbReference>
<dbReference type="PANTHER" id="PTHR43337">
    <property type="entry name" value="XANTHINE/URACIL PERMEASE C887.17-RELATED"/>
    <property type="match status" value="1"/>
</dbReference>
<dbReference type="PANTHER" id="PTHR43337:SF1">
    <property type="entry name" value="XANTHINE_URACIL PERMEASE C887.17-RELATED"/>
    <property type="match status" value="1"/>
</dbReference>
<dbReference type="Pfam" id="PF00860">
    <property type="entry name" value="Xan_ur_permease"/>
    <property type="match status" value="1"/>
</dbReference>
<accession>L7WRR4</accession>